<evidence type="ECO:0000255" key="1">
    <source>
        <dbReference type="HAMAP-Rule" id="MF_01618"/>
    </source>
</evidence>
<dbReference type="EC" id="2.3.1.16" evidence="1"/>
<dbReference type="EMBL" id="CP000644">
    <property type="protein sequence ID" value="ABO90211.1"/>
    <property type="molecule type" value="Genomic_DNA"/>
</dbReference>
<dbReference type="RefSeq" id="WP_005311309.1">
    <property type="nucleotide sequence ID" value="NC_009348.1"/>
</dbReference>
<dbReference type="SMR" id="A4SMT9"/>
<dbReference type="STRING" id="29491.GCA_000820065_00416"/>
<dbReference type="KEGG" id="asa:ASA_2146"/>
<dbReference type="eggNOG" id="COG0183">
    <property type="taxonomic scope" value="Bacteria"/>
</dbReference>
<dbReference type="HOGENOM" id="CLU_031026_2_0_6"/>
<dbReference type="UniPathway" id="UPA00659"/>
<dbReference type="Proteomes" id="UP000000225">
    <property type="component" value="Chromosome"/>
</dbReference>
<dbReference type="GO" id="GO:0005829">
    <property type="term" value="C:cytosol"/>
    <property type="evidence" value="ECO:0007669"/>
    <property type="project" value="TreeGrafter"/>
</dbReference>
<dbReference type="GO" id="GO:0003988">
    <property type="term" value="F:acetyl-CoA C-acyltransferase activity"/>
    <property type="evidence" value="ECO:0007669"/>
    <property type="project" value="UniProtKB-UniRule"/>
</dbReference>
<dbReference type="GO" id="GO:0006635">
    <property type="term" value="P:fatty acid beta-oxidation"/>
    <property type="evidence" value="ECO:0007669"/>
    <property type="project" value="UniProtKB-UniRule"/>
</dbReference>
<dbReference type="CDD" id="cd00751">
    <property type="entry name" value="thiolase"/>
    <property type="match status" value="1"/>
</dbReference>
<dbReference type="FunFam" id="3.40.47.10:FF:000011">
    <property type="entry name" value="3-ketoacyl-CoA thiolase"/>
    <property type="match status" value="1"/>
</dbReference>
<dbReference type="Gene3D" id="3.40.47.10">
    <property type="match status" value="1"/>
</dbReference>
<dbReference type="HAMAP" id="MF_01618">
    <property type="entry name" value="FadI"/>
    <property type="match status" value="1"/>
</dbReference>
<dbReference type="InterPro" id="IPR012806">
    <property type="entry name" value="Ac-CoA_C-AcTrfase_FadI"/>
</dbReference>
<dbReference type="InterPro" id="IPR002155">
    <property type="entry name" value="Thiolase"/>
</dbReference>
<dbReference type="InterPro" id="IPR016039">
    <property type="entry name" value="Thiolase-like"/>
</dbReference>
<dbReference type="InterPro" id="IPR020615">
    <property type="entry name" value="Thiolase_acyl_enz_int_AS"/>
</dbReference>
<dbReference type="InterPro" id="IPR020617">
    <property type="entry name" value="Thiolase_C"/>
</dbReference>
<dbReference type="InterPro" id="IPR020613">
    <property type="entry name" value="Thiolase_CS"/>
</dbReference>
<dbReference type="InterPro" id="IPR020616">
    <property type="entry name" value="Thiolase_N"/>
</dbReference>
<dbReference type="NCBIfam" id="TIGR01930">
    <property type="entry name" value="AcCoA-C-Actrans"/>
    <property type="match status" value="1"/>
</dbReference>
<dbReference type="NCBIfam" id="TIGR02446">
    <property type="entry name" value="FadI"/>
    <property type="match status" value="1"/>
</dbReference>
<dbReference type="NCBIfam" id="NF006516">
    <property type="entry name" value="PRK08963.1"/>
    <property type="match status" value="1"/>
</dbReference>
<dbReference type="PANTHER" id="PTHR18919:SF107">
    <property type="entry name" value="ACETYL-COA ACETYLTRANSFERASE, CYTOSOLIC"/>
    <property type="match status" value="1"/>
</dbReference>
<dbReference type="PANTHER" id="PTHR18919">
    <property type="entry name" value="ACETYL-COA C-ACYLTRANSFERASE"/>
    <property type="match status" value="1"/>
</dbReference>
<dbReference type="Pfam" id="PF02803">
    <property type="entry name" value="Thiolase_C"/>
    <property type="match status" value="1"/>
</dbReference>
<dbReference type="Pfam" id="PF00108">
    <property type="entry name" value="Thiolase_N"/>
    <property type="match status" value="1"/>
</dbReference>
<dbReference type="PIRSF" id="PIRSF000429">
    <property type="entry name" value="Ac-CoA_Ac_transf"/>
    <property type="match status" value="1"/>
</dbReference>
<dbReference type="SUPFAM" id="SSF53901">
    <property type="entry name" value="Thiolase-like"/>
    <property type="match status" value="2"/>
</dbReference>
<dbReference type="PROSITE" id="PS00098">
    <property type="entry name" value="THIOLASE_1"/>
    <property type="match status" value="1"/>
</dbReference>
<dbReference type="PROSITE" id="PS00737">
    <property type="entry name" value="THIOLASE_2"/>
    <property type="match status" value="1"/>
</dbReference>
<sequence>MKQPLKLTTRQGERIAVVAGLRTPFAKQATAFHGVPAVDLGKLVVSELLARTSLDPKLIDQLVFGQVVQMPEAPNIAREIVLGTGMSVTTDAYSVSRACATSFQAVANVTESIMAGTVDIAIAGGADSSSVLPIGVSKKLARALVDLNKARNLQQRFNILRALRLKDLMPVPPAVAEYSTGLSMGQTAEQMAKSHQISREAQDALAHRSHTLAAQAWADGKLSGEVFTAHVPPYKSPLERDNNIRESSDLASYAKLKPVFDRVHGTVTAANATPLTDGAAAVLLMREGRAKELGLEPLGYIRSFAFSAIDVWQDMLMGPSYATPLALERAGITLADLTLIDMHEAFAAQTLANLKMFASAEFARDKLGRSQAIGEVDMDKFNVLGGSLAYGHPFAATGARMITQTLHELRRRGGGLGLNTACAAGGLGVAMVLEVE</sequence>
<keyword id="KW-0012">Acyltransferase</keyword>
<keyword id="KW-0963">Cytoplasm</keyword>
<keyword id="KW-0276">Fatty acid metabolism</keyword>
<keyword id="KW-0442">Lipid degradation</keyword>
<keyword id="KW-0443">Lipid metabolism</keyword>
<keyword id="KW-0808">Transferase</keyword>
<accession>A4SMT9</accession>
<organism>
    <name type="scientific">Aeromonas salmonicida (strain A449)</name>
    <dbReference type="NCBI Taxonomy" id="382245"/>
    <lineage>
        <taxon>Bacteria</taxon>
        <taxon>Pseudomonadati</taxon>
        <taxon>Pseudomonadota</taxon>
        <taxon>Gammaproteobacteria</taxon>
        <taxon>Aeromonadales</taxon>
        <taxon>Aeromonadaceae</taxon>
        <taxon>Aeromonas</taxon>
    </lineage>
</organism>
<gene>
    <name evidence="1" type="primary">fadI</name>
    <name type="ordered locus">ASA_2146</name>
</gene>
<name>FADI_AERS4</name>
<proteinExistence type="inferred from homology"/>
<comment type="function">
    <text evidence="1">Catalyzes the final step of fatty acid oxidation in which acetyl-CoA is released and the CoA ester of a fatty acid two carbons shorter is formed.</text>
</comment>
<comment type="catalytic activity">
    <reaction evidence="1">
        <text>an acyl-CoA + acetyl-CoA = a 3-oxoacyl-CoA + CoA</text>
        <dbReference type="Rhea" id="RHEA:21564"/>
        <dbReference type="ChEBI" id="CHEBI:57287"/>
        <dbReference type="ChEBI" id="CHEBI:57288"/>
        <dbReference type="ChEBI" id="CHEBI:58342"/>
        <dbReference type="ChEBI" id="CHEBI:90726"/>
        <dbReference type="EC" id="2.3.1.16"/>
    </reaction>
</comment>
<comment type="pathway">
    <text evidence="1">Lipid metabolism; fatty acid beta-oxidation.</text>
</comment>
<comment type="subunit">
    <text evidence="1">Heterotetramer of two alpha chains (FadJ) and two beta chains (FadI).</text>
</comment>
<comment type="subcellular location">
    <subcellularLocation>
        <location evidence="1">Cytoplasm</location>
    </subcellularLocation>
</comment>
<comment type="similarity">
    <text evidence="1">Belongs to the thiolase-like superfamily. Thiolase family.</text>
</comment>
<reference key="1">
    <citation type="journal article" date="2008" name="BMC Genomics">
        <title>The genome of Aeromonas salmonicida subsp. salmonicida A449: insights into the evolution of a fish pathogen.</title>
        <authorList>
            <person name="Reith M.E."/>
            <person name="Singh R.K."/>
            <person name="Curtis B."/>
            <person name="Boyd J.M."/>
            <person name="Bouevitch A."/>
            <person name="Kimball J."/>
            <person name="Munholland J."/>
            <person name="Murphy C."/>
            <person name="Sarty D."/>
            <person name="Williams J."/>
            <person name="Nash J.H."/>
            <person name="Johnson S.C."/>
            <person name="Brown L.L."/>
        </authorList>
    </citation>
    <scope>NUCLEOTIDE SEQUENCE [LARGE SCALE GENOMIC DNA]</scope>
    <source>
        <strain>A449</strain>
    </source>
</reference>
<protein>
    <recommendedName>
        <fullName evidence="1">3-ketoacyl-CoA thiolase</fullName>
        <ecNumber evidence="1">2.3.1.16</ecNumber>
    </recommendedName>
    <alternativeName>
        <fullName evidence="1">ACSs</fullName>
    </alternativeName>
    <alternativeName>
        <fullName evidence="1">Acetyl-CoA acyltransferase</fullName>
    </alternativeName>
    <alternativeName>
        <fullName evidence="1">Acyl-CoA ligase</fullName>
    </alternativeName>
    <alternativeName>
        <fullName evidence="1">Beta-ketothiolase</fullName>
    </alternativeName>
    <alternativeName>
        <fullName evidence="1">Fatty acid oxidation complex subunit beta</fullName>
    </alternativeName>
</protein>
<feature type="chain" id="PRO_1000069493" description="3-ketoacyl-CoA thiolase">
    <location>
        <begin position="1"/>
        <end position="436"/>
    </location>
</feature>
<feature type="active site" description="Acyl-thioester intermediate" evidence="1">
    <location>
        <position position="99"/>
    </location>
</feature>
<feature type="active site" description="Proton acceptor" evidence="1">
    <location>
        <position position="392"/>
    </location>
</feature>
<feature type="active site" description="Proton acceptor" evidence="1">
    <location>
        <position position="422"/>
    </location>
</feature>